<proteinExistence type="evidence at transcript level"/>
<keyword id="KW-0349">Heme</keyword>
<keyword id="KW-0408">Iron</keyword>
<keyword id="KW-0472">Membrane</keyword>
<keyword id="KW-0479">Metal-binding</keyword>
<keyword id="KW-0496">Mitochondrion</keyword>
<keyword id="KW-0503">Monooxygenase</keyword>
<keyword id="KW-0560">Oxidoreductase</keyword>
<keyword id="KW-1185">Reference proteome</keyword>
<keyword id="KW-0809">Transit peptide</keyword>
<organism>
    <name type="scientific">Drosophila melanogaster</name>
    <name type="common">Fruit fly</name>
    <dbReference type="NCBI Taxonomy" id="7227"/>
    <lineage>
        <taxon>Eukaryota</taxon>
        <taxon>Metazoa</taxon>
        <taxon>Ecdysozoa</taxon>
        <taxon>Arthropoda</taxon>
        <taxon>Hexapoda</taxon>
        <taxon>Insecta</taxon>
        <taxon>Pterygota</taxon>
        <taxon>Neoptera</taxon>
        <taxon>Endopterygota</taxon>
        <taxon>Diptera</taxon>
        <taxon>Brachycera</taxon>
        <taxon>Muscomorpha</taxon>
        <taxon>Ephydroidea</taxon>
        <taxon>Drosophilidae</taxon>
        <taxon>Drosophila</taxon>
        <taxon>Sophophora</taxon>
    </lineage>
</organism>
<protein>
    <recommendedName>
        <fullName>Probable cytochrome P450 301a1, mitochondrial</fullName>
        <ecNumber>1.14.-.-</ecNumber>
    </recommendedName>
    <alternativeName>
        <fullName>CYPCCCIA1</fullName>
    </alternativeName>
</protein>
<feature type="transit peptide" description="Mitochondrion" evidence="2">
    <location>
        <begin position="1"/>
        <end status="unknown"/>
    </location>
</feature>
<feature type="chain" id="PRO_0000003628" description="Probable cytochrome P450 301a1, mitochondrial">
    <location>
        <begin status="unknown"/>
        <end position="553"/>
    </location>
</feature>
<feature type="binding site" description="axial binding residue" evidence="1">
    <location>
        <position position="502"/>
    </location>
    <ligand>
        <name>heme</name>
        <dbReference type="ChEBI" id="CHEBI:30413"/>
    </ligand>
    <ligandPart>
        <name>Fe</name>
        <dbReference type="ChEBI" id="CHEBI:18248"/>
    </ligandPart>
</feature>
<comment type="cofactor">
    <cofactor evidence="1">
        <name>heme</name>
        <dbReference type="ChEBI" id="CHEBI:30413"/>
    </cofactor>
</comment>
<comment type="subcellular location">
    <subcellularLocation>
        <location evidence="3">Mitochondrion membrane</location>
    </subcellularLocation>
</comment>
<comment type="similarity">
    <text evidence="3">Belongs to the cytochrome P450 family.</text>
</comment>
<gene>
    <name type="primary">Cyp301a1</name>
    <name type="ORF">CG8587</name>
</gene>
<name>CP301_DROME</name>
<dbReference type="EC" id="1.14.-.-"/>
<dbReference type="EMBL" id="AE013599">
    <property type="protein sequence ID" value="AAF58492.1"/>
    <property type="molecule type" value="Genomic_DNA"/>
</dbReference>
<dbReference type="EMBL" id="AY094897">
    <property type="protein sequence ID" value="AAM11250.1"/>
    <property type="molecule type" value="mRNA"/>
</dbReference>
<dbReference type="RefSeq" id="NP_610796.1">
    <property type="nucleotide sequence ID" value="NM_136952.3"/>
</dbReference>
<dbReference type="SMR" id="Q9V6D6"/>
<dbReference type="FunCoup" id="Q9V6D6">
    <property type="interactions" value="19"/>
</dbReference>
<dbReference type="STRING" id="7227.FBpp0086937"/>
<dbReference type="GlyGen" id="Q9V6D6">
    <property type="glycosylation" value="1 site"/>
</dbReference>
<dbReference type="PaxDb" id="7227-FBpp0086937"/>
<dbReference type="DNASU" id="36378"/>
<dbReference type="EnsemblMetazoa" id="FBtr0087824">
    <property type="protein sequence ID" value="FBpp0086937"/>
    <property type="gene ID" value="FBgn0033753"/>
</dbReference>
<dbReference type="GeneID" id="36378"/>
<dbReference type="KEGG" id="dme:Dmel_CG8587"/>
<dbReference type="UCSC" id="CG8587-RA">
    <property type="organism name" value="d. melanogaster"/>
</dbReference>
<dbReference type="AGR" id="FB:FBgn0033753"/>
<dbReference type="CTD" id="36378"/>
<dbReference type="FlyBase" id="FBgn0033753">
    <property type="gene designation" value="Cyp301a1"/>
</dbReference>
<dbReference type="VEuPathDB" id="VectorBase:FBgn0033753"/>
<dbReference type="eggNOG" id="KOG0159">
    <property type="taxonomic scope" value="Eukaryota"/>
</dbReference>
<dbReference type="HOGENOM" id="CLU_001570_28_0_1"/>
<dbReference type="InParanoid" id="Q9V6D6"/>
<dbReference type="OMA" id="HEPLEYA"/>
<dbReference type="OrthoDB" id="3945418at2759"/>
<dbReference type="PhylomeDB" id="Q9V6D6"/>
<dbReference type="BioGRID-ORCS" id="36378">
    <property type="hits" value="0 hits in 1 CRISPR screen"/>
</dbReference>
<dbReference type="GenomeRNAi" id="36378"/>
<dbReference type="PRO" id="PR:Q9V6D6"/>
<dbReference type="Proteomes" id="UP000000803">
    <property type="component" value="Chromosome 2R"/>
</dbReference>
<dbReference type="Bgee" id="FBgn0033753">
    <property type="expression patterns" value="Expressed in embryonic/larval hindgut (Drosophila) and 24 other cell types or tissues"/>
</dbReference>
<dbReference type="GO" id="GO:0031966">
    <property type="term" value="C:mitochondrial membrane"/>
    <property type="evidence" value="ECO:0007669"/>
    <property type="project" value="UniProtKB-SubCell"/>
</dbReference>
<dbReference type="GO" id="GO:0020037">
    <property type="term" value="F:heme binding"/>
    <property type="evidence" value="ECO:0007669"/>
    <property type="project" value="InterPro"/>
</dbReference>
<dbReference type="GO" id="GO:0005506">
    <property type="term" value="F:iron ion binding"/>
    <property type="evidence" value="ECO:0007669"/>
    <property type="project" value="InterPro"/>
</dbReference>
<dbReference type="GO" id="GO:0004497">
    <property type="term" value="F:monooxygenase activity"/>
    <property type="evidence" value="ECO:0007669"/>
    <property type="project" value="UniProtKB-KW"/>
</dbReference>
<dbReference type="GO" id="GO:0016705">
    <property type="term" value="F:oxidoreductase activity, acting on paired donors, with incorporation or reduction of molecular oxygen"/>
    <property type="evidence" value="ECO:0007669"/>
    <property type="project" value="InterPro"/>
</dbReference>
<dbReference type="GO" id="GO:0007490">
    <property type="term" value="P:tergite morphogenesis"/>
    <property type="evidence" value="ECO:0000315"/>
    <property type="project" value="FlyBase"/>
</dbReference>
<dbReference type="CDD" id="cd11054">
    <property type="entry name" value="CYP24A1-like"/>
    <property type="match status" value="1"/>
</dbReference>
<dbReference type="FunFam" id="1.10.630.10:FF:000006">
    <property type="entry name" value="Cytochrome P450 302a1, mitochondrial"/>
    <property type="match status" value="1"/>
</dbReference>
<dbReference type="Gene3D" id="1.10.630.10">
    <property type="entry name" value="Cytochrome P450"/>
    <property type="match status" value="1"/>
</dbReference>
<dbReference type="InterPro" id="IPR050479">
    <property type="entry name" value="CYP11_CYP27_families"/>
</dbReference>
<dbReference type="InterPro" id="IPR001128">
    <property type="entry name" value="Cyt_P450"/>
</dbReference>
<dbReference type="InterPro" id="IPR002401">
    <property type="entry name" value="Cyt_P450_E_grp-I"/>
</dbReference>
<dbReference type="InterPro" id="IPR036396">
    <property type="entry name" value="Cyt_P450_sf"/>
</dbReference>
<dbReference type="PANTHER" id="PTHR24279">
    <property type="entry name" value="CYTOCHROME P450"/>
    <property type="match status" value="1"/>
</dbReference>
<dbReference type="PANTHER" id="PTHR24279:SF120">
    <property type="entry name" value="CYTOCHROME P450"/>
    <property type="match status" value="1"/>
</dbReference>
<dbReference type="Pfam" id="PF00067">
    <property type="entry name" value="p450"/>
    <property type="match status" value="1"/>
</dbReference>
<dbReference type="PRINTS" id="PR00463">
    <property type="entry name" value="EP450I"/>
</dbReference>
<dbReference type="PRINTS" id="PR00385">
    <property type="entry name" value="P450"/>
</dbReference>
<dbReference type="SUPFAM" id="SSF48264">
    <property type="entry name" value="Cytochrome P450"/>
    <property type="match status" value="1"/>
</dbReference>
<evidence type="ECO:0000250" key="1"/>
<evidence type="ECO:0000255" key="2"/>
<evidence type="ECO:0000305" key="3"/>
<sequence length="553" mass="62825">MNNLSLKAWRSTVSCGPNLRQCVPRISGAGSRRAQCRESSTGVATCPHLADSEEASAPRIHSTSEWQNALPYNQIPGPKPIPILGNTWRLMPIIGQYTISDVAKISSLLHDRYGRIVRFGGLIGRPDLLFIYDADEIEKCYRSEGPTPFRPSMPSLVKYKSVVRKDFFGDLGGVVGVHGEPWREFRSRVQKPVLQLSTIRRYLQPLEVITEDFLVRCENLLDENQELPEDFDNEIHKWSLECIGRVALDTRLGCLESNLKPDSEPQQIIDAAKYALRNVATLELKAPYWRYFPTPLWTRYVKNMNFFVGVCMKYIQSATERLKTQDPSLRAGEPSLVEKVILSQKDEKIATIMALDLILVGIDTISMAVCSMLYQLATRPVDQQKVHEELKRLLPDPNTPLTIPLLDQMHHLKGFIKEVFRMYSTVIGNGRTLMEDSVICGYQVPKGVQAVFPTIVTGNMEEYVTDAATFRPERWLKPQHGGTPGKLHPFASLPYGYGARMCLGRRFADLEMQILLAKLLRNYKLEYNHKPLDYAVTFMYAPDGPLRFKMTRV</sequence>
<accession>Q9V6D6</accession>
<reference key="1">
    <citation type="journal article" date="2000" name="Science">
        <title>The genome sequence of Drosophila melanogaster.</title>
        <authorList>
            <person name="Adams M.D."/>
            <person name="Celniker S.E."/>
            <person name="Holt R.A."/>
            <person name="Evans C.A."/>
            <person name="Gocayne J.D."/>
            <person name="Amanatides P.G."/>
            <person name="Scherer S.E."/>
            <person name="Li P.W."/>
            <person name="Hoskins R.A."/>
            <person name="Galle R.F."/>
            <person name="George R.A."/>
            <person name="Lewis S.E."/>
            <person name="Richards S."/>
            <person name="Ashburner M."/>
            <person name="Henderson S.N."/>
            <person name="Sutton G.G."/>
            <person name="Wortman J.R."/>
            <person name="Yandell M.D."/>
            <person name="Zhang Q."/>
            <person name="Chen L.X."/>
            <person name="Brandon R.C."/>
            <person name="Rogers Y.-H.C."/>
            <person name="Blazej R.G."/>
            <person name="Champe M."/>
            <person name="Pfeiffer B.D."/>
            <person name="Wan K.H."/>
            <person name="Doyle C."/>
            <person name="Baxter E.G."/>
            <person name="Helt G."/>
            <person name="Nelson C.R."/>
            <person name="Miklos G.L.G."/>
            <person name="Abril J.F."/>
            <person name="Agbayani A."/>
            <person name="An H.-J."/>
            <person name="Andrews-Pfannkoch C."/>
            <person name="Baldwin D."/>
            <person name="Ballew R.M."/>
            <person name="Basu A."/>
            <person name="Baxendale J."/>
            <person name="Bayraktaroglu L."/>
            <person name="Beasley E.M."/>
            <person name="Beeson K.Y."/>
            <person name="Benos P.V."/>
            <person name="Berman B.P."/>
            <person name="Bhandari D."/>
            <person name="Bolshakov S."/>
            <person name="Borkova D."/>
            <person name="Botchan M.R."/>
            <person name="Bouck J."/>
            <person name="Brokstein P."/>
            <person name="Brottier P."/>
            <person name="Burtis K.C."/>
            <person name="Busam D.A."/>
            <person name="Butler H."/>
            <person name="Cadieu E."/>
            <person name="Center A."/>
            <person name="Chandra I."/>
            <person name="Cherry J.M."/>
            <person name="Cawley S."/>
            <person name="Dahlke C."/>
            <person name="Davenport L.B."/>
            <person name="Davies P."/>
            <person name="de Pablos B."/>
            <person name="Delcher A."/>
            <person name="Deng Z."/>
            <person name="Mays A.D."/>
            <person name="Dew I."/>
            <person name="Dietz S.M."/>
            <person name="Dodson K."/>
            <person name="Doup L.E."/>
            <person name="Downes M."/>
            <person name="Dugan-Rocha S."/>
            <person name="Dunkov B.C."/>
            <person name="Dunn P."/>
            <person name="Durbin K.J."/>
            <person name="Evangelista C.C."/>
            <person name="Ferraz C."/>
            <person name="Ferriera S."/>
            <person name="Fleischmann W."/>
            <person name="Fosler C."/>
            <person name="Gabrielian A.E."/>
            <person name="Garg N.S."/>
            <person name="Gelbart W.M."/>
            <person name="Glasser K."/>
            <person name="Glodek A."/>
            <person name="Gong F."/>
            <person name="Gorrell J.H."/>
            <person name="Gu Z."/>
            <person name="Guan P."/>
            <person name="Harris M."/>
            <person name="Harris N.L."/>
            <person name="Harvey D.A."/>
            <person name="Heiman T.J."/>
            <person name="Hernandez J.R."/>
            <person name="Houck J."/>
            <person name="Hostin D."/>
            <person name="Houston K.A."/>
            <person name="Howland T.J."/>
            <person name="Wei M.-H."/>
            <person name="Ibegwam C."/>
            <person name="Jalali M."/>
            <person name="Kalush F."/>
            <person name="Karpen G.H."/>
            <person name="Ke Z."/>
            <person name="Kennison J.A."/>
            <person name="Ketchum K.A."/>
            <person name="Kimmel B.E."/>
            <person name="Kodira C.D."/>
            <person name="Kraft C.L."/>
            <person name="Kravitz S."/>
            <person name="Kulp D."/>
            <person name="Lai Z."/>
            <person name="Lasko P."/>
            <person name="Lei Y."/>
            <person name="Levitsky A.A."/>
            <person name="Li J.H."/>
            <person name="Li Z."/>
            <person name="Liang Y."/>
            <person name="Lin X."/>
            <person name="Liu X."/>
            <person name="Mattei B."/>
            <person name="McIntosh T.C."/>
            <person name="McLeod M.P."/>
            <person name="McPherson D."/>
            <person name="Merkulov G."/>
            <person name="Milshina N.V."/>
            <person name="Mobarry C."/>
            <person name="Morris J."/>
            <person name="Moshrefi A."/>
            <person name="Mount S.M."/>
            <person name="Moy M."/>
            <person name="Murphy B."/>
            <person name="Murphy L."/>
            <person name="Muzny D.M."/>
            <person name="Nelson D.L."/>
            <person name="Nelson D.R."/>
            <person name="Nelson K.A."/>
            <person name="Nixon K."/>
            <person name="Nusskern D.R."/>
            <person name="Pacleb J.M."/>
            <person name="Palazzolo M."/>
            <person name="Pittman G.S."/>
            <person name="Pan S."/>
            <person name="Pollard J."/>
            <person name="Puri V."/>
            <person name="Reese M.G."/>
            <person name="Reinert K."/>
            <person name="Remington K."/>
            <person name="Saunders R.D.C."/>
            <person name="Scheeler F."/>
            <person name="Shen H."/>
            <person name="Shue B.C."/>
            <person name="Siden-Kiamos I."/>
            <person name="Simpson M."/>
            <person name="Skupski M.P."/>
            <person name="Smith T.J."/>
            <person name="Spier E."/>
            <person name="Spradling A.C."/>
            <person name="Stapleton M."/>
            <person name="Strong R."/>
            <person name="Sun E."/>
            <person name="Svirskas R."/>
            <person name="Tector C."/>
            <person name="Turner R."/>
            <person name="Venter E."/>
            <person name="Wang A.H."/>
            <person name="Wang X."/>
            <person name="Wang Z.-Y."/>
            <person name="Wassarman D.A."/>
            <person name="Weinstock G.M."/>
            <person name="Weissenbach J."/>
            <person name="Williams S.M."/>
            <person name="Woodage T."/>
            <person name="Worley K.C."/>
            <person name="Wu D."/>
            <person name="Yang S."/>
            <person name="Yao Q.A."/>
            <person name="Ye J."/>
            <person name="Yeh R.-F."/>
            <person name="Zaveri J.S."/>
            <person name="Zhan M."/>
            <person name="Zhang G."/>
            <person name="Zhao Q."/>
            <person name="Zheng L."/>
            <person name="Zheng X.H."/>
            <person name="Zhong F.N."/>
            <person name="Zhong W."/>
            <person name="Zhou X."/>
            <person name="Zhu S.C."/>
            <person name="Zhu X."/>
            <person name="Smith H.O."/>
            <person name="Gibbs R.A."/>
            <person name="Myers E.W."/>
            <person name="Rubin G.M."/>
            <person name="Venter J.C."/>
        </authorList>
    </citation>
    <scope>NUCLEOTIDE SEQUENCE [LARGE SCALE GENOMIC DNA]</scope>
    <source>
        <strain>Berkeley</strain>
    </source>
</reference>
<reference key="2">
    <citation type="journal article" date="2002" name="Genome Biol.">
        <title>Annotation of the Drosophila melanogaster euchromatic genome: a systematic review.</title>
        <authorList>
            <person name="Misra S."/>
            <person name="Crosby M.A."/>
            <person name="Mungall C.J."/>
            <person name="Matthews B.B."/>
            <person name="Campbell K.S."/>
            <person name="Hradecky P."/>
            <person name="Huang Y."/>
            <person name="Kaminker J.S."/>
            <person name="Millburn G.H."/>
            <person name="Prochnik S.E."/>
            <person name="Smith C.D."/>
            <person name="Tupy J.L."/>
            <person name="Whitfield E.J."/>
            <person name="Bayraktaroglu L."/>
            <person name="Berman B.P."/>
            <person name="Bettencourt B.R."/>
            <person name="Celniker S.E."/>
            <person name="de Grey A.D.N.J."/>
            <person name="Drysdale R.A."/>
            <person name="Harris N.L."/>
            <person name="Richter J."/>
            <person name="Russo S."/>
            <person name="Schroeder A.J."/>
            <person name="Shu S.Q."/>
            <person name="Stapleton M."/>
            <person name="Yamada C."/>
            <person name="Ashburner M."/>
            <person name="Gelbart W.M."/>
            <person name="Rubin G.M."/>
            <person name="Lewis S.E."/>
        </authorList>
    </citation>
    <scope>GENOME REANNOTATION</scope>
    <source>
        <strain>Berkeley</strain>
    </source>
</reference>
<reference key="3">
    <citation type="journal article" date="2002" name="Genome Biol.">
        <title>A Drosophila full-length cDNA resource.</title>
        <authorList>
            <person name="Stapleton M."/>
            <person name="Carlson J.W."/>
            <person name="Brokstein P."/>
            <person name="Yu C."/>
            <person name="Champe M."/>
            <person name="George R.A."/>
            <person name="Guarin H."/>
            <person name="Kronmiller B."/>
            <person name="Pacleb J.M."/>
            <person name="Park S."/>
            <person name="Wan K.H."/>
            <person name="Rubin G.M."/>
            <person name="Celniker S.E."/>
        </authorList>
    </citation>
    <scope>NUCLEOTIDE SEQUENCE [LARGE SCALE MRNA]</scope>
    <source>
        <strain>Berkeley</strain>
        <tissue>Embryo</tissue>
    </source>
</reference>